<feature type="chain" id="PRO_0000096448" description="Meiotic expression up-regulated protein 14">
    <location>
        <begin position="1"/>
        <end position="335"/>
    </location>
</feature>
<protein>
    <recommendedName>
        <fullName>Meiotic expression up-regulated protein 14</fullName>
    </recommendedName>
</protein>
<dbReference type="EMBL" id="AB016983">
    <property type="protein sequence ID" value="BAA32472.1"/>
    <property type="molecule type" value="Genomic_DNA"/>
</dbReference>
<dbReference type="EMBL" id="CU329671">
    <property type="protein sequence ID" value="CAB37434.1"/>
    <property type="molecule type" value="Genomic_DNA"/>
</dbReference>
<dbReference type="PIR" id="T39391">
    <property type="entry name" value="T39391"/>
</dbReference>
<dbReference type="RefSeq" id="NP_596695.1">
    <property type="nucleotide sequence ID" value="NM_001022619.2"/>
</dbReference>
<dbReference type="SMR" id="O94756"/>
<dbReference type="BioGRID" id="276438">
    <property type="interactions" value="9"/>
</dbReference>
<dbReference type="FunCoup" id="O94756">
    <property type="interactions" value="2"/>
</dbReference>
<dbReference type="STRING" id="284812.O94756"/>
<dbReference type="iPTMnet" id="O94756"/>
<dbReference type="PaxDb" id="4896-SPBC1347.03.1"/>
<dbReference type="EnsemblFungi" id="SPBC1347.03.1">
    <property type="protein sequence ID" value="SPBC1347.03.1:pep"/>
    <property type="gene ID" value="SPBC1347.03"/>
</dbReference>
<dbReference type="GeneID" id="2539892"/>
<dbReference type="KEGG" id="spo:2539892"/>
<dbReference type="PomBase" id="SPBC1347.03">
    <property type="gene designation" value="meu14"/>
</dbReference>
<dbReference type="VEuPathDB" id="FungiDB:SPBC1347.03"/>
<dbReference type="eggNOG" id="ENOG502RCV0">
    <property type="taxonomic scope" value="Eukaryota"/>
</dbReference>
<dbReference type="HOGENOM" id="CLU_046464_2_1_1"/>
<dbReference type="InParanoid" id="O94756"/>
<dbReference type="OMA" id="DECNESM"/>
<dbReference type="PhylomeDB" id="O94756"/>
<dbReference type="PRO" id="PR:O94756"/>
<dbReference type="Proteomes" id="UP000002485">
    <property type="component" value="Chromosome II"/>
</dbReference>
<dbReference type="GO" id="GO:0005737">
    <property type="term" value="C:cytoplasm"/>
    <property type="evidence" value="ECO:0007669"/>
    <property type="project" value="UniProtKB-KW"/>
</dbReference>
<dbReference type="GO" id="GO:0035974">
    <property type="term" value="C:meiotic spindle pole body"/>
    <property type="evidence" value="ECO:0000314"/>
    <property type="project" value="PomBase"/>
</dbReference>
<dbReference type="GO" id="GO:0031965">
    <property type="term" value="C:nuclear membrane"/>
    <property type="evidence" value="ECO:0007669"/>
    <property type="project" value="UniProtKB-SubCell"/>
</dbReference>
<dbReference type="GO" id="GO:0070056">
    <property type="term" value="C:prospore membrane leading edge"/>
    <property type="evidence" value="ECO:0000314"/>
    <property type="project" value="PomBase"/>
</dbReference>
<dbReference type="GO" id="GO:0070057">
    <property type="term" value="C:prospore membrane spindle pole body attachment site"/>
    <property type="evidence" value="ECO:0000314"/>
    <property type="project" value="PomBase"/>
</dbReference>
<dbReference type="GO" id="GO:0008289">
    <property type="term" value="F:lipid binding"/>
    <property type="evidence" value="ECO:0000318"/>
    <property type="project" value="GO_Central"/>
</dbReference>
<dbReference type="GO" id="GO:0031322">
    <property type="term" value="P:ascospore-type prospore-specific spindle pole body remodeling"/>
    <property type="evidence" value="ECO:0000315"/>
    <property type="project" value="PomBase"/>
</dbReference>
<dbReference type="GO" id="GO:0006897">
    <property type="term" value="P:endocytosis"/>
    <property type="evidence" value="ECO:0000318"/>
    <property type="project" value="GO_Central"/>
</dbReference>
<dbReference type="GO" id="GO:0140043">
    <property type="term" value="P:lipid droplet localization to prospore membrane leading edge"/>
    <property type="evidence" value="ECO:0000269"/>
    <property type="project" value="PomBase"/>
</dbReference>
<dbReference type="Gene3D" id="1.20.1270.60">
    <property type="entry name" value="Arfaptin homology (AH) domain/BAR domain"/>
    <property type="match status" value="1"/>
</dbReference>
<dbReference type="InterPro" id="IPR027267">
    <property type="entry name" value="AH/BAR_dom_sf"/>
</dbReference>
<dbReference type="InterPro" id="IPR028245">
    <property type="entry name" value="PIL1/LSP1"/>
</dbReference>
<dbReference type="PANTHER" id="PTHR31962:SF8">
    <property type="entry name" value="MEIOTIC EXPRESSION UP-REGULATED PROTEIN 14"/>
    <property type="match status" value="1"/>
</dbReference>
<dbReference type="PANTHER" id="PTHR31962">
    <property type="entry name" value="SPHINGOLIPID LONG CHAIN BASE-RESPONSIVE PROTEIN PIL1"/>
    <property type="match status" value="1"/>
</dbReference>
<dbReference type="Pfam" id="PF13805">
    <property type="entry name" value="Pil1"/>
    <property type="match status" value="1"/>
</dbReference>
<name>MEU14_SCHPO</name>
<gene>
    <name type="primary">meu14</name>
    <name type="ORF">SPBC1347.03</name>
</gene>
<keyword id="KW-0963">Cytoplasm</keyword>
<keyword id="KW-0206">Cytoskeleton</keyword>
<keyword id="KW-0469">Meiosis</keyword>
<keyword id="KW-0472">Membrane</keyword>
<keyword id="KW-0539">Nucleus</keyword>
<keyword id="KW-1185">Reference proteome</keyword>
<keyword id="KW-0749">Sporulation</keyword>
<sequence>MPKSSNLKMQRKGSLRENGLVKGLNKNKFSISKLKELSHADDSRKSHRIIRSGKSSGEAYKQAGKGLMNLGNHLSDWGAKSSNLSLNDISDKIGVLVSELGETEIEFVKAFNENRIKFKAIRAMEDSIAPSRAHRQRLISSIEREEERDPLSPKLTDLQNQLVRTEAENLVGEMQLDNTSREVFKSSFQGLMDAFQLRAQKQMTLSYYASQLAELINDEVAYPGDNPAAYSQKYATQIMHQCVESMARLLAPVTSETTEHVGSDCEFTRKSSSSVEFSDHSQDSGDPSQQNILQVKNVQAVLSIPEAESYKAQLLSSIAEEQKKKELQAKSTVFL</sequence>
<evidence type="ECO:0000269" key="1">
    <source>
    </source>
</evidence>
<accession>O94756</accession>
<reference key="1">
    <citation type="journal article" date="2003" name="J. Cell Sci.">
        <title>Fission yeast meu14+ is required for proper nuclear division and accurate forespore membrane formation during meiosis II.</title>
        <authorList>
            <person name="Okuzaki D."/>
            <person name="Satake W."/>
            <person name="Hirata A."/>
            <person name="Nojima H."/>
        </authorList>
    </citation>
    <scope>NUCLEOTIDE SEQUENCE [GENOMIC DNA]</scope>
    <scope>FUNCTION</scope>
    <scope>SUBCELLULAR LOCATION</scope>
    <source>
        <strain>972 / ATCC 24843</strain>
    </source>
</reference>
<reference key="2">
    <citation type="journal article" date="2002" name="Nature">
        <title>The genome sequence of Schizosaccharomyces pombe.</title>
        <authorList>
            <person name="Wood V."/>
            <person name="Gwilliam R."/>
            <person name="Rajandream M.A."/>
            <person name="Lyne M.H."/>
            <person name="Lyne R."/>
            <person name="Stewart A."/>
            <person name="Sgouros J.G."/>
            <person name="Peat N."/>
            <person name="Hayles J."/>
            <person name="Baker S.G."/>
            <person name="Basham D."/>
            <person name="Bowman S."/>
            <person name="Brooks K."/>
            <person name="Brown D."/>
            <person name="Brown S."/>
            <person name="Chillingworth T."/>
            <person name="Churcher C.M."/>
            <person name="Collins M."/>
            <person name="Connor R."/>
            <person name="Cronin A."/>
            <person name="Davis P."/>
            <person name="Feltwell T."/>
            <person name="Fraser A."/>
            <person name="Gentles S."/>
            <person name="Goble A."/>
            <person name="Hamlin N."/>
            <person name="Harris D.E."/>
            <person name="Hidalgo J."/>
            <person name="Hodgson G."/>
            <person name="Holroyd S."/>
            <person name="Hornsby T."/>
            <person name="Howarth S."/>
            <person name="Huckle E.J."/>
            <person name="Hunt S."/>
            <person name="Jagels K."/>
            <person name="James K.D."/>
            <person name="Jones L."/>
            <person name="Jones M."/>
            <person name="Leather S."/>
            <person name="McDonald S."/>
            <person name="McLean J."/>
            <person name="Mooney P."/>
            <person name="Moule S."/>
            <person name="Mungall K.L."/>
            <person name="Murphy L.D."/>
            <person name="Niblett D."/>
            <person name="Odell C."/>
            <person name="Oliver K."/>
            <person name="O'Neil S."/>
            <person name="Pearson D."/>
            <person name="Quail M.A."/>
            <person name="Rabbinowitsch E."/>
            <person name="Rutherford K.M."/>
            <person name="Rutter S."/>
            <person name="Saunders D."/>
            <person name="Seeger K."/>
            <person name="Sharp S."/>
            <person name="Skelton J."/>
            <person name="Simmonds M.N."/>
            <person name="Squares R."/>
            <person name="Squares S."/>
            <person name="Stevens K."/>
            <person name="Taylor K."/>
            <person name="Taylor R.G."/>
            <person name="Tivey A."/>
            <person name="Walsh S.V."/>
            <person name="Warren T."/>
            <person name="Whitehead S."/>
            <person name="Woodward J.R."/>
            <person name="Volckaert G."/>
            <person name="Aert R."/>
            <person name="Robben J."/>
            <person name="Grymonprez B."/>
            <person name="Weltjens I."/>
            <person name="Vanstreels E."/>
            <person name="Rieger M."/>
            <person name="Schaefer M."/>
            <person name="Mueller-Auer S."/>
            <person name="Gabel C."/>
            <person name="Fuchs M."/>
            <person name="Duesterhoeft A."/>
            <person name="Fritzc C."/>
            <person name="Holzer E."/>
            <person name="Moestl D."/>
            <person name="Hilbert H."/>
            <person name="Borzym K."/>
            <person name="Langer I."/>
            <person name="Beck A."/>
            <person name="Lehrach H."/>
            <person name="Reinhardt R."/>
            <person name="Pohl T.M."/>
            <person name="Eger P."/>
            <person name="Zimmermann W."/>
            <person name="Wedler H."/>
            <person name="Wambutt R."/>
            <person name="Purnelle B."/>
            <person name="Goffeau A."/>
            <person name="Cadieu E."/>
            <person name="Dreano S."/>
            <person name="Gloux S."/>
            <person name="Lelaure V."/>
            <person name="Mottier S."/>
            <person name="Galibert F."/>
            <person name="Aves S.J."/>
            <person name="Xiang Z."/>
            <person name="Hunt C."/>
            <person name="Moore K."/>
            <person name="Hurst S.M."/>
            <person name="Lucas M."/>
            <person name="Rochet M."/>
            <person name="Gaillardin C."/>
            <person name="Tallada V.A."/>
            <person name="Garzon A."/>
            <person name="Thode G."/>
            <person name="Daga R.R."/>
            <person name="Cruzado L."/>
            <person name="Jimenez J."/>
            <person name="Sanchez M."/>
            <person name="del Rey F."/>
            <person name="Benito J."/>
            <person name="Dominguez A."/>
            <person name="Revuelta J.L."/>
            <person name="Moreno S."/>
            <person name="Armstrong J."/>
            <person name="Forsburg S.L."/>
            <person name="Cerutti L."/>
            <person name="Lowe T."/>
            <person name="McCombie W.R."/>
            <person name="Paulsen I."/>
            <person name="Potashkin J."/>
            <person name="Shpakovski G.V."/>
            <person name="Ussery D."/>
            <person name="Barrell B.G."/>
            <person name="Nurse P."/>
        </authorList>
    </citation>
    <scope>NUCLEOTIDE SEQUENCE [LARGE SCALE GENOMIC DNA]</scope>
    <source>
        <strain>972 / ATCC 24843</strain>
    </source>
</reference>
<comment type="function">
    <text evidence="1">Has a role in nuclear division during meiosis II where it stabilizes the proper segregation of the spindle pole bodies. Also has a role in the formation and extension of the forespore membrane.</text>
</comment>
<comment type="subcellular location">
    <subcellularLocation>
        <location evidence="1">Cytoplasm</location>
        <location evidence="1">Cytoskeleton</location>
        <location evidence="1">Microtubule organizing center</location>
        <location evidence="1">Spindle pole body</location>
    </subcellularLocation>
    <subcellularLocation>
        <location evidence="1">Nucleus membrane</location>
        <topology evidence="1">Peripheral membrane protein</topology>
        <orientation evidence="1">Cytoplasmic side</orientation>
    </subcellularLocation>
    <subcellularLocation>
        <location evidence="1">Prospore membrane</location>
    </subcellularLocation>
</comment>
<proteinExistence type="predicted"/>
<organism>
    <name type="scientific">Schizosaccharomyces pombe (strain 972 / ATCC 24843)</name>
    <name type="common">Fission yeast</name>
    <dbReference type="NCBI Taxonomy" id="284812"/>
    <lineage>
        <taxon>Eukaryota</taxon>
        <taxon>Fungi</taxon>
        <taxon>Dikarya</taxon>
        <taxon>Ascomycota</taxon>
        <taxon>Taphrinomycotina</taxon>
        <taxon>Schizosaccharomycetes</taxon>
        <taxon>Schizosaccharomycetales</taxon>
        <taxon>Schizosaccharomycetaceae</taxon>
        <taxon>Schizosaccharomyces</taxon>
    </lineage>
</organism>